<protein>
    <recommendedName>
        <fullName evidence="1">Isoleucine--tRNA ligase</fullName>
        <ecNumber evidence="1">6.1.1.5</ecNumber>
    </recommendedName>
    <alternativeName>
        <fullName evidence="1">Isoleucyl-tRNA synthetase</fullName>
        <shortName evidence="1">IleRS</shortName>
    </alternativeName>
</protein>
<evidence type="ECO:0000255" key="1">
    <source>
        <dbReference type="HAMAP-Rule" id="MF_02002"/>
    </source>
</evidence>
<sequence>MDFKETLLMPKTDFPMRGNLPNREPQMQEEWKDMNIYEKVQARTKGRPLFVLHDGPPYANGDIHMGHALNKVLKDMIVRYKSMAGFHAPYVPGWDTHGLPIEQALTKSGVDRKSMSVAEFRKLCEEFARKQIDRQREQFMRLGVRGDWWNPYVTLDKGFEAQQVKVFGEMAKKGYIYKGKKPVYWSPSSESALAEAEIEYHDKRSPSIYVAFPVKDGKNVLQQDEKIVIWTTTPWTIPANLGIAVHPELEYSVVAVKGEKYVVASGLVETLESALEWENPEILRTIKGVDLEYVVAEHPIYGRDSLVVLGDHVTLDAGTGCVHTAPGHGEEDYIVGQKYGLDVLCPVDDKGYMTAEAPGFEGLFYDEANKPITQKLDECGALLKLTFITHSYAHDWRTKKPVIYRATAQWFASIENFRDELLRAIQEVKWVPEWGETRLYNMVRDRGDWCISRQRVWGVPIPIFYGENGEPIITDETINHVSELFRKHGSNVWFEWETKDLLPEGFTHESSPNGQFTREMDIMDVWFDSGSSHQGVLVEREELDRPADLYLEGSDQYRGWFNSSLSTSVAITGKAPYKGVLSHGFTLDGEGKKMSKSLGNVVIPNDVMKQLGADILRLWVASVDYQADVRVSDKILKQVSEVYRKIRNTYRFLLGNLHDFHPATHRVAIDQLNGLDRYMLAKLNDVINRVKKAYDEYQFSTVYHELHNFCTIELSSFYMDIAKDTLYVKHADHPDRRATQTVMYDVLVALAKLLSPIIPHTADEVWKHIPGVEEESVQLTDMPEPIELGDVSELKQKWDAFINVRDDVLKALENARNEKVIGKSLTAAITLYADGDVRQLLEELGPLDKLFIVSAVKVAGSVADAPKEAESYDDLAIVVEKAVGETCERCWVVSPTVGTNNEHPTLCADCAETVATYYVTK</sequence>
<name>SYI_HALH5</name>
<comment type="function">
    <text evidence="1">Catalyzes the attachment of isoleucine to tRNA(Ile). As IleRS can inadvertently accommodate and process structurally similar amino acids such as valine, to avoid such errors it has two additional distinct tRNA(Ile)-dependent editing activities. One activity is designated as 'pretransfer' editing and involves the hydrolysis of activated Val-AMP. The other activity is designated 'posttransfer' editing and involves deacylation of mischarged Val-tRNA(Ile).</text>
</comment>
<comment type="catalytic activity">
    <reaction evidence="1">
        <text>tRNA(Ile) + L-isoleucine + ATP = L-isoleucyl-tRNA(Ile) + AMP + diphosphate</text>
        <dbReference type="Rhea" id="RHEA:11060"/>
        <dbReference type="Rhea" id="RHEA-COMP:9666"/>
        <dbReference type="Rhea" id="RHEA-COMP:9695"/>
        <dbReference type="ChEBI" id="CHEBI:30616"/>
        <dbReference type="ChEBI" id="CHEBI:33019"/>
        <dbReference type="ChEBI" id="CHEBI:58045"/>
        <dbReference type="ChEBI" id="CHEBI:78442"/>
        <dbReference type="ChEBI" id="CHEBI:78528"/>
        <dbReference type="ChEBI" id="CHEBI:456215"/>
        <dbReference type="EC" id="6.1.1.5"/>
    </reaction>
</comment>
<comment type="cofactor">
    <cofactor evidence="1">
        <name>Zn(2+)</name>
        <dbReference type="ChEBI" id="CHEBI:29105"/>
    </cofactor>
    <text evidence="1">Binds 1 zinc ion per subunit.</text>
</comment>
<comment type="subunit">
    <text evidence="1">Monomer.</text>
</comment>
<comment type="subcellular location">
    <subcellularLocation>
        <location evidence="1">Cytoplasm</location>
    </subcellularLocation>
</comment>
<comment type="domain">
    <text evidence="1">IleRS has two distinct active sites: one for aminoacylation and one for editing. The misactivated valine is translocated from the active site to the editing site, which sterically excludes the correctly activated isoleucine. The single editing site contains two valyl binding pockets, one specific for each substrate (Val-AMP or Val-tRNA(Ile)).</text>
</comment>
<comment type="similarity">
    <text evidence="1">Belongs to the class-I aminoacyl-tRNA synthetase family. IleS type 1 subfamily.</text>
</comment>
<accession>Q9K9V0</accession>
<gene>
    <name evidence="1" type="primary">ileS</name>
    <name type="ordered locus">BH2545</name>
</gene>
<organism>
    <name type="scientific">Halalkalibacterium halodurans (strain ATCC BAA-125 / DSM 18197 / FERM 7344 / JCM 9153 / C-125)</name>
    <name type="common">Bacillus halodurans</name>
    <dbReference type="NCBI Taxonomy" id="272558"/>
    <lineage>
        <taxon>Bacteria</taxon>
        <taxon>Bacillati</taxon>
        <taxon>Bacillota</taxon>
        <taxon>Bacilli</taxon>
        <taxon>Bacillales</taxon>
        <taxon>Bacillaceae</taxon>
        <taxon>Halalkalibacterium (ex Joshi et al. 2022)</taxon>
    </lineage>
</organism>
<keyword id="KW-0030">Aminoacyl-tRNA synthetase</keyword>
<keyword id="KW-0067">ATP-binding</keyword>
<keyword id="KW-0963">Cytoplasm</keyword>
<keyword id="KW-0436">Ligase</keyword>
<keyword id="KW-0479">Metal-binding</keyword>
<keyword id="KW-0547">Nucleotide-binding</keyword>
<keyword id="KW-0648">Protein biosynthesis</keyword>
<keyword id="KW-1185">Reference proteome</keyword>
<keyword id="KW-0862">Zinc</keyword>
<proteinExistence type="inferred from homology"/>
<feature type="chain" id="PRO_0000098349" description="Isoleucine--tRNA ligase">
    <location>
        <begin position="1"/>
        <end position="921"/>
    </location>
</feature>
<feature type="short sequence motif" description="'HIGH' region">
    <location>
        <begin position="57"/>
        <end position="67"/>
    </location>
</feature>
<feature type="short sequence motif" description="'KMSKS' region">
    <location>
        <begin position="593"/>
        <end position="597"/>
    </location>
</feature>
<feature type="binding site" evidence="1">
    <location>
        <position position="552"/>
    </location>
    <ligand>
        <name>L-isoleucyl-5'-AMP</name>
        <dbReference type="ChEBI" id="CHEBI:178002"/>
    </ligand>
</feature>
<feature type="binding site" evidence="1">
    <location>
        <position position="596"/>
    </location>
    <ligand>
        <name>ATP</name>
        <dbReference type="ChEBI" id="CHEBI:30616"/>
    </ligand>
</feature>
<feature type="binding site" evidence="1">
    <location>
        <position position="887"/>
    </location>
    <ligand>
        <name>Zn(2+)</name>
        <dbReference type="ChEBI" id="CHEBI:29105"/>
    </ligand>
</feature>
<feature type="binding site" evidence="1">
    <location>
        <position position="890"/>
    </location>
    <ligand>
        <name>Zn(2+)</name>
        <dbReference type="ChEBI" id="CHEBI:29105"/>
    </ligand>
</feature>
<feature type="binding site" evidence="1">
    <location>
        <position position="907"/>
    </location>
    <ligand>
        <name>Zn(2+)</name>
        <dbReference type="ChEBI" id="CHEBI:29105"/>
    </ligand>
</feature>
<feature type="binding site" evidence="1">
    <location>
        <position position="910"/>
    </location>
    <ligand>
        <name>Zn(2+)</name>
        <dbReference type="ChEBI" id="CHEBI:29105"/>
    </ligand>
</feature>
<dbReference type="EC" id="6.1.1.5" evidence="1"/>
<dbReference type="EMBL" id="BA000004">
    <property type="protein sequence ID" value="BAB06264.1"/>
    <property type="molecule type" value="Genomic_DNA"/>
</dbReference>
<dbReference type="PIR" id="A83968">
    <property type="entry name" value="A83968"/>
</dbReference>
<dbReference type="RefSeq" id="WP_010898696.1">
    <property type="nucleotide sequence ID" value="NC_002570.2"/>
</dbReference>
<dbReference type="SMR" id="Q9K9V0"/>
<dbReference type="STRING" id="272558.gene:10728443"/>
<dbReference type="KEGG" id="bha:BH2545"/>
<dbReference type="eggNOG" id="COG0060">
    <property type="taxonomic scope" value="Bacteria"/>
</dbReference>
<dbReference type="HOGENOM" id="CLU_001493_7_1_9"/>
<dbReference type="OrthoDB" id="9810365at2"/>
<dbReference type="Proteomes" id="UP000001258">
    <property type="component" value="Chromosome"/>
</dbReference>
<dbReference type="GO" id="GO:0005829">
    <property type="term" value="C:cytosol"/>
    <property type="evidence" value="ECO:0007669"/>
    <property type="project" value="TreeGrafter"/>
</dbReference>
<dbReference type="GO" id="GO:0002161">
    <property type="term" value="F:aminoacyl-tRNA deacylase activity"/>
    <property type="evidence" value="ECO:0007669"/>
    <property type="project" value="InterPro"/>
</dbReference>
<dbReference type="GO" id="GO:0005524">
    <property type="term" value="F:ATP binding"/>
    <property type="evidence" value="ECO:0007669"/>
    <property type="project" value="UniProtKB-UniRule"/>
</dbReference>
<dbReference type="GO" id="GO:0004822">
    <property type="term" value="F:isoleucine-tRNA ligase activity"/>
    <property type="evidence" value="ECO:0007669"/>
    <property type="project" value="UniProtKB-UniRule"/>
</dbReference>
<dbReference type="GO" id="GO:0000049">
    <property type="term" value="F:tRNA binding"/>
    <property type="evidence" value="ECO:0007669"/>
    <property type="project" value="InterPro"/>
</dbReference>
<dbReference type="GO" id="GO:0008270">
    <property type="term" value="F:zinc ion binding"/>
    <property type="evidence" value="ECO:0007669"/>
    <property type="project" value="UniProtKB-UniRule"/>
</dbReference>
<dbReference type="GO" id="GO:0006428">
    <property type="term" value="P:isoleucyl-tRNA aminoacylation"/>
    <property type="evidence" value="ECO:0007669"/>
    <property type="project" value="UniProtKB-UniRule"/>
</dbReference>
<dbReference type="CDD" id="cd07960">
    <property type="entry name" value="Anticodon_Ia_Ile_BEm"/>
    <property type="match status" value="1"/>
</dbReference>
<dbReference type="CDD" id="cd00818">
    <property type="entry name" value="IleRS_core"/>
    <property type="match status" value="1"/>
</dbReference>
<dbReference type="FunFam" id="1.10.10.830:FF:000001">
    <property type="entry name" value="Isoleucine--tRNA ligase"/>
    <property type="match status" value="1"/>
</dbReference>
<dbReference type="FunFam" id="1.10.730.20:FF:000001">
    <property type="entry name" value="Isoleucine--tRNA ligase"/>
    <property type="match status" value="1"/>
</dbReference>
<dbReference type="FunFam" id="3.40.50.620:FF:000152">
    <property type="entry name" value="Isoleucine--tRNA ligase"/>
    <property type="match status" value="1"/>
</dbReference>
<dbReference type="FunFam" id="3.90.740.10:FF:000006">
    <property type="entry name" value="Isoleucine--tRNA ligase"/>
    <property type="match status" value="1"/>
</dbReference>
<dbReference type="Gene3D" id="1.10.730.20">
    <property type="match status" value="1"/>
</dbReference>
<dbReference type="Gene3D" id="3.40.50.620">
    <property type="entry name" value="HUPs"/>
    <property type="match status" value="2"/>
</dbReference>
<dbReference type="Gene3D" id="1.10.10.830">
    <property type="entry name" value="Ile-tRNA synthetase CP2 domain-like"/>
    <property type="match status" value="1"/>
</dbReference>
<dbReference type="Gene3D" id="3.90.740.10">
    <property type="entry name" value="Valyl/Leucyl/Isoleucyl-tRNA synthetase, editing domain"/>
    <property type="match status" value="1"/>
</dbReference>
<dbReference type="HAMAP" id="MF_02002">
    <property type="entry name" value="Ile_tRNA_synth_type1"/>
    <property type="match status" value="1"/>
</dbReference>
<dbReference type="InterPro" id="IPR001412">
    <property type="entry name" value="aa-tRNA-synth_I_CS"/>
</dbReference>
<dbReference type="InterPro" id="IPR002300">
    <property type="entry name" value="aa-tRNA-synth_Ia"/>
</dbReference>
<dbReference type="InterPro" id="IPR033708">
    <property type="entry name" value="Anticodon_Ile_BEm"/>
</dbReference>
<dbReference type="InterPro" id="IPR002301">
    <property type="entry name" value="Ile-tRNA-ligase"/>
</dbReference>
<dbReference type="InterPro" id="IPR023585">
    <property type="entry name" value="Ile-tRNA-ligase_type1"/>
</dbReference>
<dbReference type="InterPro" id="IPR050081">
    <property type="entry name" value="Ile-tRNA_ligase"/>
</dbReference>
<dbReference type="InterPro" id="IPR013155">
    <property type="entry name" value="M/V/L/I-tRNA-synth_anticd-bd"/>
</dbReference>
<dbReference type="InterPro" id="IPR014729">
    <property type="entry name" value="Rossmann-like_a/b/a_fold"/>
</dbReference>
<dbReference type="InterPro" id="IPR009080">
    <property type="entry name" value="tRNAsynth_Ia_anticodon-bd"/>
</dbReference>
<dbReference type="InterPro" id="IPR009008">
    <property type="entry name" value="Val/Leu/Ile-tRNA-synth_edit"/>
</dbReference>
<dbReference type="InterPro" id="IPR010663">
    <property type="entry name" value="Znf_FPG/IleRS"/>
</dbReference>
<dbReference type="NCBIfam" id="TIGR00392">
    <property type="entry name" value="ileS"/>
    <property type="match status" value="1"/>
</dbReference>
<dbReference type="PANTHER" id="PTHR42765:SF1">
    <property type="entry name" value="ISOLEUCINE--TRNA LIGASE, MITOCHONDRIAL"/>
    <property type="match status" value="1"/>
</dbReference>
<dbReference type="PANTHER" id="PTHR42765">
    <property type="entry name" value="SOLEUCYL-TRNA SYNTHETASE"/>
    <property type="match status" value="1"/>
</dbReference>
<dbReference type="Pfam" id="PF08264">
    <property type="entry name" value="Anticodon_1"/>
    <property type="match status" value="1"/>
</dbReference>
<dbReference type="Pfam" id="PF00133">
    <property type="entry name" value="tRNA-synt_1"/>
    <property type="match status" value="1"/>
</dbReference>
<dbReference type="Pfam" id="PF06827">
    <property type="entry name" value="zf-FPG_IleRS"/>
    <property type="match status" value="1"/>
</dbReference>
<dbReference type="PRINTS" id="PR00984">
    <property type="entry name" value="TRNASYNTHILE"/>
</dbReference>
<dbReference type="SUPFAM" id="SSF47323">
    <property type="entry name" value="Anticodon-binding domain of a subclass of class I aminoacyl-tRNA synthetases"/>
    <property type="match status" value="1"/>
</dbReference>
<dbReference type="SUPFAM" id="SSF52374">
    <property type="entry name" value="Nucleotidylyl transferase"/>
    <property type="match status" value="1"/>
</dbReference>
<dbReference type="SUPFAM" id="SSF50677">
    <property type="entry name" value="ValRS/IleRS/LeuRS editing domain"/>
    <property type="match status" value="1"/>
</dbReference>
<dbReference type="PROSITE" id="PS00178">
    <property type="entry name" value="AA_TRNA_LIGASE_I"/>
    <property type="match status" value="1"/>
</dbReference>
<reference key="1">
    <citation type="journal article" date="2000" name="Nucleic Acids Res.">
        <title>Complete genome sequence of the alkaliphilic bacterium Bacillus halodurans and genomic sequence comparison with Bacillus subtilis.</title>
        <authorList>
            <person name="Takami H."/>
            <person name="Nakasone K."/>
            <person name="Takaki Y."/>
            <person name="Maeno G."/>
            <person name="Sasaki R."/>
            <person name="Masui N."/>
            <person name="Fuji F."/>
            <person name="Hirama C."/>
            <person name="Nakamura Y."/>
            <person name="Ogasawara N."/>
            <person name="Kuhara S."/>
            <person name="Horikoshi K."/>
        </authorList>
    </citation>
    <scope>NUCLEOTIDE SEQUENCE [LARGE SCALE GENOMIC DNA]</scope>
    <source>
        <strain>ATCC BAA-125 / DSM 18197 / FERM 7344 / JCM 9153 / C-125</strain>
    </source>
</reference>